<dbReference type="EC" id="4.98.1.1" evidence="1"/>
<dbReference type="EMBL" id="CP000671">
    <property type="protein sequence ID" value="ABQ98597.1"/>
    <property type="molecule type" value="Genomic_DNA"/>
</dbReference>
<dbReference type="SMR" id="A5UCU6"/>
<dbReference type="KEGG" id="hip:CGSHiEE_06240"/>
<dbReference type="HOGENOM" id="CLU_018884_0_0_6"/>
<dbReference type="UniPathway" id="UPA00252">
    <property type="reaction ID" value="UER00325"/>
</dbReference>
<dbReference type="GO" id="GO:0005737">
    <property type="term" value="C:cytoplasm"/>
    <property type="evidence" value="ECO:0007669"/>
    <property type="project" value="UniProtKB-SubCell"/>
</dbReference>
<dbReference type="GO" id="GO:0004325">
    <property type="term" value="F:ferrochelatase activity"/>
    <property type="evidence" value="ECO:0007669"/>
    <property type="project" value="UniProtKB-UniRule"/>
</dbReference>
<dbReference type="GO" id="GO:0046872">
    <property type="term" value="F:metal ion binding"/>
    <property type="evidence" value="ECO:0007669"/>
    <property type="project" value="UniProtKB-KW"/>
</dbReference>
<dbReference type="GO" id="GO:0006783">
    <property type="term" value="P:heme biosynthetic process"/>
    <property type="evidence" value="ECO:0007669"/>
    <property type="project" value="UniProtKB-UniRule"/>
</dbReference>
<dbReference type="CDD" id="cd00419">
    <property type="entry name" value="Ferrochelatase_C"/>
    <property type="match status" value="1"/>
</dbReference>
<dbReference type="CDD" id="cd03411">
    <property type="entry name" value="Ferrochelatase_N"/>
    <property type="match status" value="1"/>
</dbReference>
<dbReference type="FunFam" id="3.40.50.1400:FF:000002">
    <property type="entry name" value="Ferrochelatase"/>
    <property type="match status" value="1"/>
</dbReference>
<dbReference type="Gene3D" id="3.40.50.1400">
    <property type="match status" value="2"/>
</dbReference>
<dbReference type="HAMAP" id="MF_00323">
    <property type="entry name" value="Ferrochelatase"/>
    <property type="match status" value="1"/>
</dbReference>
<dbReference type="InterPro" id="IPR001015">
    <property type="entry name" value="Ferrochelatase"/>
</dbReference>
<dbReference type="InterPro" id="IPR019772">
    <property type="entry name" value="Ferrochelatase_AS"/>
</dbReference>
<dbReference type="InterPro" id="IPR033644">
    <property type="entry name" value="Ferrochelatase_C"/>
</dbReference>
<dbReference type="InterPro" id="IPR033659">
    <property type="entry name" value="Ferrochelatase_N"/>
</dbReference>
<dbReference type="NCBIfam" id="TIGR00109">
    <property type="entry name" value="hemH"/>
    <property type="match status" value="1"/>
</dbReference>
<dbReference type="PANTHER" id="PTHR11108">
    <property type="entry name" value="FERROCHELATASE"/>
    <property type="match status" value="1"/>
</dbReference>
<dbReference type="PANTHER" id="PTHR11108:SF1">
    <property type="entry name" value="FERROCHELATASE, MITOCHONDRIAL"/>
    <property type="match status" value="1"/>
</dbReference>
<dbReference type="Pfam" id="PF00762">
    <property type="entry name" value="Ferrochelatase"/>
    <property type="match status" value="1"/>
</dbReference>
<dbReference type="SUPFAM" id="SSF53800">
    <property type="entry name" value="Chelatase"/>
    <property type="match status" value="1"/>
</dbReference>
<dbReference type="PROSITE" id="PS00534">
    <property type="entry name" value="FERROCHELATASE"/>
    <property type="match status" value="1"/>
</dbReference>
<name>HEMH_HAEIE</name>
<keyword id="KW-0963">Cytoplasm</keyword>
<keyword id="KW-0350">Heme biosynthesis</keyword>
<keyword id="KW-0408">Iron</keyword>
<keyword id="KW-0456">Lyase</keyword>
<keyword id="KW-0479">Metal-binding</keyword>
<keyword id="KW-0627">Porphyrin biosynthesis</keyword>
<reference key="1">
    <citation type="journal article" date="2007" name="Genome Biol.">
        <title>Characterization and modeling of the Haemophilus influenzae core and supragenomes based on the complete genomic sequences of Rd and 12 clinical nontypeable strains.</title>
        <authorList>
            <person name="Hogg J.S."/>
            <person name="Hu F.Z."/>
            <person name="Janto B."/>
            <person name="Boissy R."/>
            <person name="Hayes J."/>
            <person name="Keefe R."/>
            <person name="Post J.C."/>
            <person name="Ehrlich G.D."/>
        </authorList>
    </citation>
    <scope>NUCLEOTIDE SEQUENCE [LARGE SCALE GENOMIC DNA]</scope>
    <source>
        <strain>PittEE</strain>
    </source>
</reference>
<sequence length="323" mass="36915">MTKSAKIGVLLANLGTPDSPTPKSISRYLWQFLTDPRVVDLPRCKWYPLLKAIILPLRSKRIAKNYQAIWTEQGSPLLAISRQQKDALQAYLDTQNINAQVEIAMTYGNPSIQSAVKNLLKNQVERIIVLPLYPQYSSSTTGAVFDAFANALKEERGLVPFDFIHSYHIDENYINALANSIKVRLKSDEFLLFSYHGIPLRYEKMGDYYREHCKQTTIAVVNKLGLTENQWGMTFQSRFGREEWLQPYTDKFLESAATQNIQKIAVICPGFSVDCLETIEEIDKENRENFLKNGGQSYQYIPALNVEHAHIEMMGKLILEKLA</sequence>
<feature type="chain" id="PRO_1000019308" description="Ferrochelatase">
    <location>
        <begin position="1"/>
        <end position="323"/>
    </location>
</feature>
<feature type="binding site" evidence="1">
    <location>
        <position position="196"/>
    </location>
    <ligand>
        <name>Fe cation</name>
        <dbReference type="ChEBI" id="CHEBI:24875"/>
    </ligand>
</feature>
<feature type="binding site" evidence="1">
    <location>
        <position position="277"/>
    </location>
    <ligand>
        <name>Fe cation</name>
        <dbReference type="ChEBI" id="CHEBI:24875"/>
    </ligand>
</feature>
<proteinExistence type="inferred from homology"/>
<gene>
    <name evidence="1" type="primary">hemH</name>
    <name type="ordered locus">CGSHiEE_06240</name>
</gene>
<comment type="function">
    <text evidence="1">Catalyzes the ferrous insertion into protoporphyrin IX.</text>
</comment>
<comment type="catalytic activity">
    <reaction evidence="1">
        <text>heme b + 2 H(+) = protoporphyrin IX + Fe(2+)</text>
        <dbReference type="Rhea" id="RHEA:22584"/>
        <dbReference type="ChEBI" id="CHEBI:15378"/>
        <dbReference type="ChEBI" id="CHEBI:29033"/>
        <dbReference type="ChEBI" id="CHEBI:57306"/>
        <dbReference type="ChEBI" id="CHEBI:60344"/>
        <dbReference type="EC" id="4.98.1.1"/>
    </reaction>
</comment>
<comment type="pathway">
    <text evidence="1">Porphyrin-containing compound metabolism; protoheme biosynthesis; protoheme from protoporphyrin-IX: step 1/1.</text>
</comment>
<comment type="subcellular location">
    <subcellularLocation>
        <location evidence="1">Cytoplasm</location>
    </subcellularLocation>
</comment>
<comment type="similarity">
    <text evidence="1">Belongs to the ferrochelatase family.</text>
</comment>
<organism>
    <name type="scientific">Haemophilus influenzae (strain PittEE)</name>
    <dbReference type="NCBI Taxonomy" id="374930"/>
    <lineage>
        <taxon>Bacteria</taxon>
        <taxon>Pseudomonadati</taxon>
        <taxon>Pseudomonadota</taxon>
        <taxon>Gammaproteobacteria</taxon>
        <taxon>Pasteurellales</taxon>
        <taxon>Pasteurellaceae</taxon>
        <taxon>Haemophilus</taxon>
    </lineage>
</organism>
<evidence type="ECO:0000255" key="1">
    <source>
        <dbReference type="HAMAP-Rule" id="MF_00323"/>
    </source>
</evidence>
<protein>
    <recommendedName>
        <fullName evidence="1">Ferrochelatase</fullName>
        <ecNumber evidence="1">4.98.1.1</ecNumber>
    </recommendedName>
    <alternativeName>
        <fullName evidence="1">Heme synthase</fullName>
    </alternativeName>
    <alternativeName>
        <fullName evidence="1">Protoheme ferro-lyase</fullName>
    </alternativeName>
</protein>
<accession>A5UCU6</accession>